<gene>
    <name evidence="5" type="primary">EMF2B</name>
    <name evidence="9" type="ordered locus">Os09g0306800</name>
    <name evidence="6" type="ordered locus">LOC_Os09g13630</name>
    <name evidence="8" type="ORF">OSJNBa0064I23.28</name>
</gene>
<dbReference type="EMBL" id="AP005912">
    <property type="protein sequence ID" value="BAD36510.1"/>
    <property type="molecule type" value="Genomic_DNA"/>
</dbReference>
<dbReference type="EMBL" id="AP008215">
    <property type="protein sequence ID" value="BAF24739.2"/>
    <property type="status" value="ALT_INIT"/>
    <property type="molecule type" value="Genomic_DNA"/>
</dbReference>
<dbReference type="EMBL" id="AP014965">
    <property type="protein sequence ID" value="BAT07361.1"/>
    <property type="status" value="ALT_INIT"/>
    <property type="molecule type" value="Genomic_DNA"/>
</dbReference>
<dbReference type="FunCoup" id="Q69KN0">
    <property type="interactions" value="1550"/>
</dbReference>
<dbReference type="STRING" id="39947.Q69KN0"/>
<dbReference type="iPTMnet" id="Q69KN0"/>
<dbReference type="PaxDb" id="39947-Q69KN0"/>
<dbReference type="EnsemblPlants" id="Os09t0306800-01">
    <property type="protein sequence ID" value="Os09t0306800-01"/>
    <property type="gene ID" value="Os09g0306800"/>
</dbReference>
<dbReference type="Gramene" id="Os09t0306800-01">
    <property type="protein sequence ID" value="Os09t0306800-01"/>
    <property type="gene ID" value="Os09g0306800"/>
</dbReference>
<dbReference type="KEGG" id="dosa:Os09g0306800"/>
<dbReference type="KEGG" id="osa:4346674"/>
<dbReference type="eggNOG" id="KOG2350">
    <property type="taxonomic scope" value="Eukaryota"/>
</dbReference>
<dbReference type="HOGENOM" id="CLU_022782_1_0_1"/>
<dbReference type="InParanoid" id="Q69KN0"/>
<dbReference type="OrthoDB" id="166746at2759"/>
<dbReference type="Proteomes" id="UP000000763">
    <property type="component" value="Chromosome 9"/>
</dbReference>
<dbReference type="Proteomes" id="UP000059680">
    <property type="component" value="Chromosome 9"/>
</dbReference>
<dbReference type="GO" id="GO:0005677">
    <property type="term" value="C:chromatin silencing complex"/>
    <property type="evidence" value="ECO:0000314"/>
    <property type="project" value="UniProtKB"/>
</dbReference>
<dbReference type="GO" id="GO:0005634">
    <property type="term" value="C:nucleus"/>
    <property type="evidence" value="ECO:0000318"/>
    <property type="project" value="GO_Central"/>
</dbReference>
<dbReference type="GO" id="GO:0031519">
    <property type="term" value="C:PcG protein complex"/>
    <property type="evidence" value="ECO:0000314"/>
    <property type="project" value="UniProtKB"/>
</dbReference>
<dbReference type="GO" id="GO:0031490">
    <property type="term" value="F:chromatin DNA binding"/>
    <property type="evidence" value="ECO:0000318"/>
    <property type="project" value="GO_Central"/>
</dbReference>
<dbReference type="GO" id="GO:0008270">
    <property type="term" value="F:zinc ion binding"/>
    <property type="evidence" value="ECO:0007669"/>
    <property type="project" value="UniProtKB-KW"/>
</dbReference>
<dbReference type="GO" id="GO:0030154">
    <property type="term" value="P:cell differentiation"/>
    <property type="evidence" value="ECO:0007669"/>
    <property type="project" value="UniProtKB-KW"/>
</dbReference>
<dbReference type="GO" id="GO:0009908">
    <property type="term" value="P:flower development"/>
    <property type="evidence" value="ECO:0000315"/>
    <property type="project" value="UniProtKB"/>
</dbReference>
<dbReference type="GO" id="GO:0031507">
    <property type="term" value="P:heterochromatin formation"/>
    <property type="evidence" value="ECO:0000314"/>
    <property type="project" value="UniProtKB"/>
</dbReference>
<dbReference type="GO" id="GO:0048586">
    <property type="term" value="P:regulation of long-day photoperiodism, flowering"/>
    <property type="evidence" value="ECO:0000315"/>
    <property type="project" value="UniProtKB"/>
</dbReference>
<dbReference type="CDD" id="cd21553">
    <property type="entry name" value="VEFS-box_EMF2-like"/>
    <property type="match status" value="1"/>
</dbReference>
<dbReference type="CDD" id="cd21749">
    <property type="entry name" value="ZnB-Zn_EMF2-like"/>
    <property type="match status" value="1"/>
</dbReference>
<dbReference type="InterPro" id="IPR056068">
    <property type="entry name" value="EMF2-like_DUF7651"/>
</dbReference>
<dbReference type="InterPro" id="IPR019135">
    <property type="entry name" value="Polycomb_protein_VEFS-Box"/>
</dbReference>
<dbReference type="PANTHER" id="PTHR22597">
    <property type="entry name" value="POLYCOMB GROUP PROTEIN"/>
    <property type="match status" value="1"/>
</dbReference>
<dbReference type="PANTHER" id="PTHR22597:SF0">
    <property type="entry name" value="POLYCOMB PROTEIN SUZ12"/>
    <property type="match status" value="1"/>
</dbReference>
<dbReference type="Pfam" id="PF24663">
    <property type="entry name" value="DUF7651"/>
    <property type="match status" value="1"/>
</dbReference>
<dbReference type="Pfam" id="PF09733">
    <property type="entry name" value="VEFS-Box"/>
    <property type="match status" value="1"/>
</dbReference>
<dbReference type="Pfam" id="PF23320">
    <property type="entry name" value="Zn_SUZ12"/>
    <property type="match status" value="1"/>
</dbReference>
<dbReference type="PROSITE" id="PS00028">
    <property type="entry name" value="ZINC_FINGER_C2H2_1"/>
    <property type="match status" value="1"/>
</dbReference>
<reference key="1">
    <citation type="journal article" date="2005" name="Nature">
        <title>The map-based sequence of the rice genome.</title>
        <authorList>
            <consortium name="International rice genome sequencing project (IRGSP)"/>
        </authorList>
    </citation>
    <scope>NUCLEOTIDE SEQUENCE [LARGE SCALE GENOMIC DNA]</scope>
    <source>
        <strain>cv. Nipponbare</strain>
    </source>
</reference>
<reference key="2">
    <citation type="journal article" date="2008" name="Nucleic Acids Res.">
        <title>The rice annotation project database (RAP-DB): 2008 update.</title>
        <authorList>
            <consortium name="The rice annotation project (RAP)"/>
        </authorList>
    </citation>
    <scope>GENOME REANNOTATION</scope>
    <source>
        <strain>cv. Nipponbare</strain>
    </source>
</reference>
<reference key="3">
    <citation type="journal article" date="2013" name="Rice">
        <title>Improvement of the Oryza sativa Nipponbare reference genome using next generation sequence and optical map data.</title>
        <authorList>
            <person name="Kawahara Y."/>
            <person name="de la Bastide M."/>
            <person name="Hamilton J.P."/>
            <person name="Kanamori H."/>
            <person name="McCombie W.R."/>
            <person name="Ouyang S."/>
            <person name="Schwartz D.C."/>
            <person name="Tanaka T."/>
            <person name="Wu J."/>
            <person name="Zhou S."/>
            <person name="Childs K.L."/>
            <person name="Davidson R.M."/>
            <person name="Lin H."/>
            <person name="Quesada-Ocampo L."/>
            <person name="Vaillancourt B."/>
            <person name="Sakai H."/>
            <person name="Lee S.S."/>
            <person name="Kim J."/>
            <person name="Numa H."/>
            <person name="Itoh T."/>
            <person name="Buell C.R."/>
            <person name="Matsumoto T."/>
        </authorList>
    </citation>
    <scope>GENOME REANNOTATION</scope>
    <source>
        <strain>cv. Nipponbare</strain>
    </source>
</reference>
<reference key="4">
    <citation type="journal article" date="2009" name="Mol. Plant">
        <title>Expression, imprinting, and evolution of rice homologs of the polycomb group genes.</title>
        <authorList>
            <person name="Luo M."/>
            <person name="Platten D."/>
            <person name="Chaudhury A."/>
            <person name="Peacock W.J."/>
            <person name="Dennis E.S."/>
        </authorList>
    </citation>
    <scope>FUNCTION</scope>
    <scope>TISSUE SPECIFICITY</scope>
    <scope>DISRUPTION PHENOTYPE</scope>
</reference>
<reference key="5">
    <citation type="journal article" date="2013" name="PLoS Genet.">
        <title>Polycomb group gene OsFIE2 regulates rice (Oryza sativa) seed development and grain filling via a mechanism distinct from Arabidopsis.</title>
        <authorList>
            <person name="Nallamilli B.R."/>
            <person name="Zhang J."/>
            <person name="Mujahid H."/>
            <person name="Malone B.M."/>
            <person name="Bridges S.M."/>
            <person name="Peng Z."/>
        </authorList>
    </citation>
    <scope>IDENTIFICATION BY MASS SPECTROMETRY</scope>
    <scope>FUNCTION</scope>
    <scope>SUBUNIT</scope>
</reference>
<evidence type="ECO:0000255" key="1"/>
<evidence type="ECO:0000256" key="2">
    <source>
        <dbReference type="SAM" id="MobiDB-lite"/>
    </source>
</evidence>
<evidence type="ECO:0000269" key="3">
    <source>
    </source>
</evidence>
<evidence type="ECO:0000269" key="4">
    <source>
    </source>
</evidence>
<evidence type="ECO:0000303" key="5">
    <source>
    </source>
</evidence>
<evidence type="ECO:0000305" key="6"/>
<evidence type="ECO:0000305" key="7">
    <source>
    </source>
</evidence>
<evidence type="ECO:0000312" key="8">
    <source>
        <dbReference type="EMBL" id="BAD36510.1"/>
    </source>
</evidence>
<evidence type="ECO:0000312" key="9">
    <source>
        <dbReference type="EMBL" id="BAT07361.1"/>
    </source>
</evidence>
<protein>
    <recommendedName>
        <fullName evidence="6">Polycomb group protein EMF2B</fullName>
        <shortName evidence="5">OsEMF2B</shortName>
    </recommendedName>
    <alternativeName>
        <fullName evidence="6">Polycomb group protein EMBRYONIC FLOWER 2B</fullName>
    </alternativeName>
</protein>
<comment type="function">
    <text evidence="3 7">Polycomb group (PcG) protein. PcG proteins act by forming multiprotein complexes, which are required to maintain the transcriptionally repressive state of homeotic genes throughout development. PcG proteins are not required to initiate repression, but to maintain it during later stages of development. They act via the methylation of histones, rendering chromatin heritably changed in its expressibility (Probable). Polycomb group (PcG) protein involved in the repression of flowering under long day (LD) conditions. Regulates floret development (PubMed:19825651).</text>
</comment>
<comment type="subunit">
    <text evidence="4">Component of the polycomb repressive complex 2 (PRC2), composed of the core PRC2 components FIE2, EZ1 and CLF. PRC2 methylates 'Lys-27' residues of histone H3 (H3K27me3), leading to transcriptional repression of the affected target gene.</text>
</comment>
<comment type="tissue specificity">
    <text evidence="3">Widely expressed.</text>
</comment>
<comment type="disruption phenotype">
    <text evidence="3">Dwarf phenotype with early flowering under long day (LD) conditions. Defect in floret development.</text>
</comment>
<comment type="similarity">
    <text evidence="6">Belongs to the VEFS (VRN2-EMF2-FIS2-SU(Z)12) family.</text>
</comment>
<comment type="sequence caution" evidence="6">
    <conflict type="erroneous initiation">
        <sequence resource="EMBL-CDS" id="BAF24739"/>
    </conflict>
    <text>Extended N-terminus.</text>
</comment>
<comment type="sequence caution" evidence="6">
    <conflict type="erroneous initiation">
        <sequence resource="EMBL-CDS" id="BAT07361"/>
    </conflict>
    <text>Extended N-terminus.</text>
</comment>
<proteinExistence type="evidence at protein level"/>
<feature type="chain" id="PRO_0000444464" description="Polycomb group protein EMF2B">
    <location>
        <begin position="1"/>
        <end position="604"/>
    </location>
</feature>
<feature type="zinc finger region" description="C2H2-type" evidence="1">
    <location>
        <begin position="310"/>
        <end position="331"/>
    </location>
</feature>
<feature type="region of interest" description="Disordered" evidence="2">
    <location>
        <begin position="396"/>
        <end position="440"/>
    </location>
</feature>
<feature type="region of interest" description="VEFS-box" evidence="1">
    <location>
        <begin position="454"/>
        <end position="589"/>
    </location>
</feature>
<organism>
    <name type="scientific">Oryza sativa subsp. japonica</name>
    <name type="common">Rice</name>
    <dbReference type="NCBI Taxonomy" id="39947"/>
    <lineage>
        <taxon>Eukaryota</taxon>
        <taxon>Viridiplantae</taxon>
        <taxon>Streptophyta</taxon>
        <taxon>Embryophyta</taxon>
        <taxon>Tracheophyta</taxon>
        <taxon>Spermatophyta</taxon>
        <taxon>Magnoliopsida</taxon>
        <taxon>Liliopsida</taxon>
        <taxon>Poales</taxon>
        <taxon>Poaceae</taxon>
        <taxon>BOP clade</taxon>
        <taxon>Oryzoideae</taxon>
        <taxon>Oryzeae</taxon>
        <taxon>Oryzinae</taxon>
        <taxon>Oryza</taxon>
        <taxon>Oryza sativa</taxon>
    </lineage>
</organism>
<sequence>MCRHQPRARLSPDEQLAAEESFALYCKPVELYNIIQRRSIKNPAFLQRCLLYKIHARRKKRSLITISLSGGTNKELRAQNIFPLYVLLARPTNNVSLEGHSPIYRFSRACLLTSFHEFGNKDYTEATFVIPDVKNLATSRACSLNIILISCGRAEQTFDDNNCSGNHVEGSTLQKLEGKCFWGKIPIDLLASSLGNCVSLSLGHTVEMSSTVEMTPSFLEPKFLEDDSCLTFCSQKVDATGSFQLQVSISAQEAGAKDMSESPYSVYSYNDVPPSSLTHIIRLRSGNVLFNYKYYNNTMQKTEVTEDFSCPFCLVPCGSFKGLGCHLNASHDLFHYEFWISEECQAVNVSLKTDSWRTELLAEGVDPRHQTFSYRSRFKKRKRVEISSDKIRHVHPHIVDSGSPEDAQAGSEDDYVQRENGSSVAHASVDPANSLHGSNLSAPTVLQFGKTRKLSVERADPRNRQLLQKRQFFHSHRAQPMALEQVFSDRDSEDEVDDDIADFEDRRMLDDFVDVTKDEKLIMHMWNSFVRKQRVLADGHIPWACEAFSQFHGQELVQNPALLWCWRFFMVKLWNHSLLDARAMNACNTILEGYLNGSSDPKKN</sequence>
<name>EMF2B_ORYSJ</name>
<accession>Q69KN0</accession>
<accession>Q0J2S6</accession>
<keyword id="KW-0156">Chromatin regulator</keyword>
<keyword id="KW-0217">Developmental protein</keyword>
<keyword id="KW-0221">Differentiation</keyword>
<keyword id="KW-0287">Flowering</keyword>
<keyword id="KW-0479">Metal-binding</keyword>
<keyword id="KW-1185">Reference proteome</keyword>
<keyword id="KW-0804">Transcription</keyword>
<keyword id="KW-0805">Transcription regulation</keyword>
<keyword id="KW-0862">Zinc</keyword>
<keyword id="KW-0863">Zinc-finger</keyword>